<reference key="1">
    <citation type="journal article" date="2010" name="Appl. Environ. Microbiol.">
        <title>Conserved symbiotic plasmid DNA sequences in the multireplicon pangenomic structure of Rhizobium etli.</title>
        <authorList>
            <person name="Gonzalez V."/>
            <person name="Acosta J.L."/>
            <person name="Santamaria R.I."/>
            <person name="Bustos P."/>
            <person name="Fernandez J.L."/>
            <person name="Hernandez Gonzalez I.L."/>
            <person name="Diaz R."/>
            <person name="Flores M."/>
            <person name="Palacios R."/>
            <person name="Mora J."/>
            <person name="Davila G."/>
        </authorList>
    </citation>
    <scope>NUCLEOTIDE SEQUENCE [LARGE SCALE GENOMIC DNA]</scope>
    <source>
        <strain>CIAT 652</strain>
    </source>
</reference>
<protein>
    <recommendedName>
        <fullName evidence="1">UPF0283 membrane protein RHECIAT_CH0002430</fullName>
    </recommendedName>
</protein>
<organism>
    <name type="scientific">Rhizobium etli (strain CIAT 652)</name>
    <dbReference type="NCBI Taxonomy" id="491916"/>
    <lineage>
        <taxon>Bacteria</taxon>
        <taxon>Pseudomonadati</taxon>
        <taxon>Pseudomonadota</taxon>
        <taxon>Alphaproteobacteria</taxon>
        <taxon>Hyphomicrobiales</taxon>
        <taxon>Rhizobiaceae</taxon>
        <taxon>Rhizobium/Agrobacterium group</taxon>
        <taxon>Rhizobium</taxon>
    </lineage>
</organism>
<name>Y2430_RHIE6</name>
<keyword id="KW-0997">Cell inner membrane</keyword>
<keyword id="KW-1003">Cell membrane</keyword>
<keyword id="KW-0472">Membrane</keyword>
<keyword id="KW-0812">Transmembrane</keyword>
<keyword id="KW-1133">Transmembrane helix</keyword>
<sequence>MSKPPSDPPRRPPAAFAYEDEASEPRNSGRQQQGRRKPESFSENIVVTPDEDDPFINPDSDLIAPPVATPRKRRTSFGKIAAGAFGILLSLGLGLWTDRLIRDLFTRADWLGYAALGVLAIGILAVLALVIRETAGMMRLAAVQTIKAEAEAAILETRPAKARAVLARLTTLLAANPETSKGRATLKATEGEVIDPPHLMALAERELLAPLDRKARALIVNASKRVSIVTAVSPRAVVDLLYVLYEAVRLIRAMAELYGGRPGTLGMFRLLRDVLAHLAVTGSIAVGDSLVQQVLGHGLASKLSARLGEGVINGLMTARIGIAAMDLCRPLAFRTLKRPGIGDFIADLTPSMSPRGNNP</sequence>
<dbReference type="EMBL" id="CP001074">
    <property type="protein sequence ID" value="ACE91383.1"/>
    <property type="molecule type" value="Genomic_DNA"/>
</dbReference>
<dbReference type="KEGG" id="rec:RHECIAT_CH0002430"/>
<dbReference type="eggNOG" id="COG3768">
    <property type="taxonomic scope" value="Bacteria"/>
</dbReference>
<dbReference type="HOGENOM" id="CLU_057693_1_0_5"/>
<dbReference type="Proteomes" id="UP000008817">
    <property type="component" value="Chromosome"/>
</dbReference>
<dbReference type="GO" id="GO:0005886">
    <property type="term" value="C:plasma membrane"/>
    <property type="evidence" value="ECO:0007669"/>
    <property type="project" value="UniProtKB-SubCell"/>
</dbReference>
<dbReference type="HAMAP" id="MF_01085">
    <property type="entry name" value="UPF0283"/>
    <property type="match status" value="1"/>
</dbReference>
<dbReference type="InterPro" id="IPR021147">
    <property type="entry name" value="DUF697"/>
</dbReference>
<dbReference type="InterPro" id="IPR006507">
    <property type="entry name" value="UPF0283"/>
</dbReference>
<dbReference type="NCBIfam" id="TIGR01620">
    <property type="entry name" value="hyp_HI0043"/>
    <property type="match status" value="1"/>
</dbReference>
<dbReference type="PANTHER" id="PTHR39342">
    <property type="entry name" value="UPF0283 MEMBRANE PROTEIN YCJF"/>
    <property type="match status" value="1"/>
</dbReference>
<dbReference type="PANTHER" id="PTHR39342:SF1">
    <property type="entry name" value="UPF0283 MEMBRANE PROTEIN YCJF"/>
    <property type="match status" value="1"/>
</dbReference>
<dbReference type="Pfam" id="PF05128">
    <property type="entry name" value="DUF697"/>
    <property type="match status" value="1"/>
</dbReference>
<accession>B3PPV4</accession>
<comment type="subcellular location">
    <subcellularLocation>
        <location evidence="1">Cell inner membrane</location>
        <topology evidence="1">Multi-pass membrane protein</topology>
    </subcellularLocation>
</comment>
<comment type="similarity">
    <text evidence="1">Belongs to the UPF0283 family.</text>
</comment>
<proteinExistence type="inferred from homology"/>
<evidence type="ECO:0000255" key="1">
    <source>
        <dbReference type="HAMAP-Rule" id="MF_01085"/>
    </source>
</evidence>
<evidence type="ECO:0000256" key="2">
    <source>
        <dbReference type="SAM" id="MobiDB-lite"/>
    </source>
</evidence>
<gene>
    <name type="ordered locus">RHECIAT_CH0002430</name>
</gene>
<feature type="chain" id="PRO_1000149862" description="UPF0283 membrane protein RHECIAT_CH0002430">
    <location>
        <begin position="1"/>
        <end position="359"/>
    </location>
</feature>
<feature type="transmembrane region" description="Helical" evidence="1">
    <location>
        <begin position="77"/>
        <end position="97"/>
    </location>
</feature>
<feature type="transmembrane region" description="Helical" evidence="1">
    <location>
        <begin position="111"/>
        <end position="131"/>
    </location>
</feature>
<feature type="region of interest" description="Disordered" evidence="2">
    <location>
        <begin position="1"/>
        <end position="50"/>
    </location>
</feature>